<accession>B4PR20</accession>
<feature type="chain" id="PRO_0000385350" description="Protein asunder">
    <location>
        <begin position="1"/>
        <end position="689"/>
    </location>
</feature>
<feature type="region of interest" description="Disordered" evidence="3">
    <location>
        <begin position="578"/>
        <end position="619"/>
    </location>
</feature>
<feature type="region of interest" description="Disordered" evidence="3">
    <location>
        <begin position="662"/>
        <end position="689"/>
    </location>
</feature>
<feature type="coiled-coil region" evidence="2">
    <location>
        <begin position="521"/>
        <end position="550"/>
    </location>
</feature>
<feature type="short sequence motif" description="Nuclear localization signal (NLS)" evidence="1">
    <location>
        <begin position="613"/>
        <end position="619"/>
    </location>
</feature>
<feature type="compositionally biased region" description="Low complexity" evidence="3">
    <location>
        <begin position="599"/>
        <end position="614"/>
    </location>
</feature>
<protein>
    <recommendedName>
        <fullName>Protein asunder</fullName>
    </recommendedName>
    <alternativeName>
        <fullName evidence="1">Cell cycle regulator Mat89Bb</fullName>
    </alternativeName>
    <alternativeName>
        <fullName evidence="1">Maternal transcript 89Bb</fullName>
    </alternativeName>
    <alternativeName>
        <fullName>Set apart in position or space protein</fullName>
    </alternativeName>
</protein>
<sequence>MFERNQKTIFVLDHTRYFSIASEEYISMDFLKGKPSADGGATGAAGNASGGGGSQFSKSLWTCACESSIEYCRVVWDLFPGKKHVRFIVSDTAAHIVNTWSPSTQNMSHVMNAMVMVGVPSRNVPTSSDYSVIHGLRAAIEALAEPTDEQLAAMADLGTDELPRIPNKGRVICITSARDNTSMKSLEDIFNTVLVQQNALAAPPAKKGLVIDHCHLVILNIVPLGVESLVTNRSLLKISPLLDVEIHTVSAPDISYKLTHLILNHYDLASTTVTNIPMKEEQNANSSANYDVEILHSRRAHSITCGPDFSLPTSIKQGATYETVTLKWCTPRGCGSADLQPCLGQFLVTPVDVTSRPSSCLINFLLNGRSVLLEMPRKTGSKATSHMLSARGGEIFVHSLCITRSCMDEAPSITDGPGGRVSDYRTAELGQLIKMSRMLPLKVKDPSAPPLTRRLPRYFPLTTSSSILFHLQRHISWLPHFLHLLVKEDMDKQDEVRCQQHIHELYKSASRGDVLPFTHTNGARLKLSKAKDQYRLLYRELEQLIQLNATTMHHKNLLESLQSLRAAYGDAPLKSEPGASLLRSYTESPLSPERLEPNSSGSASGSSNSNSLLKASKRRMSSCGQRSLLDIISSAERSQSNKRLDFSGRLCTPLGQVAKLYPDFGNKDKDTVASGASITPNVKEESVRS</sequence>
<proteinExistence type="inferred from homology"/>
<comment type="function">
    <text evidence="1">Component of the integrator complex, a multiprotein complex that terminates RNA polymerase II (Pol II) transcription in the promoter-proximal region of genes. The integrator complex provides a quality checkpoint during transcription elongation by driving premature transcription termination of transcripts that are unfavorably configured for transcriptional elongation: the complex terminates transcription by (1) catalyzing dephosphorylation of the C-terminal domain (CTD) of Pol II subunit Polr2A/Rbp1 and Spt5, and (2) degrading the exiting nascent RNA transcript via endonuclease activity. The integrator complex is also involved in the 3'-end processing of the U7 snRNA, and also the spliceosomal snRNAs U1, U2, U4 and U5.</text>
</comment>
<comment type="subunit">
    <text evidence="1">Belongs to the multiprotein complex Integrator, at least composed of IntS1, IntS2, IntS3, IntS4, omd/IntS5, IntS6, defl/IntS7, IntS8, IntS9, IntS10, IntS11, IntS12, asun/IntS13, IntS14 and IntS15. The core complex associates with protein phosphatase 2A subunits mts/PP2A and Pp2A-29B, to form the Integrator-PP2A (INTAC) complex.</text>
</comment>
<comment type="subcellular location">
    <subcellularLocation>
        <location evidence="1">Nucleus</location>
    </subcellularLocation>
    <subcellularLocation>
        <location evidence="1">Cytoplasm</location>
    </subcellularLocation>
    <subcellularLocation>
        <location evidence="1">Cytoplasm</location>
        <location evidence="1">Perinuclear region</location>
    </subcellularLocation>
    <text evidence="1">Colocalizes with dynein-dynactin on the nuclear surface at the meiotic G2/prophase transition in primary spermatocytes. Nuclear location is required for recruitment of dynein motors to nuclear envelope at G2/M.</text>
</comment>
<comment type="PTM">
    <text evidence="1">Phosphorylated.</text>
</comment>
<comment type="similarity">
    <text evidence="4">Belongs to the Integrator subunit 13 family.</text>
</comment>
<evidence type="ECO:0000250" key="1">
    <source>
        <dbReference type="UniProtKB" id="Q9VEX5"/>
    </source>
</evidence>
<evidence type="ECO:0000255" key="2"/>
<evidence type="ECO:0000256" key="3">
    <source>
        <dbReference type="SAM" id="MobiDB-lite"/>
    </source>
</evidence>
<evidence type="ECO:0000305" key="4"/>
<evidence type="ECO:0000312" key="5">
    <source>
        <dbReference type="EMBL" id="EDW97342.1"/>
    </source>
</evidence>
<name>INT13_DROYA</name>
<organism>
    <name type="scientific">Drosophila yakuba</name>
    <name type="common">Fruit fly</name>
    <dbReference type="NCBI Taxonomy" id="7245"/>
    <lineage>
        <taxon>Eukaryota</taxon>
        <taxon>Metazoa</taxon>
        <taxon>Ecdysozoa</taxon>
        <taxon>Arthropoda</taxon>
        <taxon>Hexapoda</taxon>
        <taxon>Insecta</taxon>
        <taxon>Pterygota</taxon>
        <taxon>Neoptera</taxon>
        <taxon>Endopterygota</taxon>
        <taxon>Diptera</taxon>
        <taxon>Brachycera</taxon>
        <taxon>Muscomorpha</taxon>
        <taxon>Ephydroidea</taxon>
        <taxon>Drosophilidae</taxon>
        <taxon>Drosophila</taxon>
        <taxon>Sophophora</taxon>
    </lineage>
</organism>
<dbReference type="EMBL" id="CM000160">
    <property type="protein sequence ID" value="EDW97342.1"/>
    <property type="molecule type" value="Genomic_DNA"/>
</dbReference>
<dbReference type="SMR" id="B4PR20"/>
<dbReference type="EnsemblMetazoa" id="FBtr0270900">
    <property type="protein sequence ID" value="FBpp0269392"/>
    <property type="gene ID" value="FBgn0241503"/>
</dbReference>
<dbReference type="EnsemblMetazoa" id="XM_002097594.4">
    <property type="protein sequence ID" value="XP_002097630.1"/>
    <property type="gene ID" value="LOC6537069"/>
</dbReference>
<dbReference type="GeneID" id="6537069"/>
<dbReference type="KEGG" id="dya:Dyak_GE24382"/>
<dbReference type="CTD" id="41971"/>
<dbReference type="eggNOG" id="KOG3711">
    <property type="taxonomic scope" value="Eukaryota"/>
</dbReference>
<dbReference type="HOGENOM" id="CLU_012654_1_0_1"/>
<dbReference type="OMA" id="NCTAMHR"/>
<dbReference type="OrthoDB" id="5844105at2759"/>
<dbReference type="PhylomeDB" id="B4PR20"/>
<dbReference type="Proteomes" id="UP000002282">
    <property type="component" value="Chromosome 3R"/>
</dbReference>
<dbReference type="GO" id="GO:0005737">
    <property type="term" value="C:cytoplasm"/>
    <property type="evidence" value="ECO:0000250"/>
    <property type="project" value="UniProtKB"/>
</dbReference>
<dbReference type="GO" id="GO:0160232">
    <property type="term" value="C:INTAC complex"/>
    <property type="evidence" value="ECO:0007669"/>
    <property type="project" value="EnsemblMetazoa"/>
</dbReference>
<dbReference type="GO" id="GO:0032039">
    <property type="term" value="C:integrator complex"/>
    <property type="evidence" value="ECO:0007669"/>
    <property type="project" value="EnsemblMetazoa"/>
</dbReference>
<dbReference type="GO" id="GO:0005634">
    <property type="term" value="C:nucleus"/>
    <property type="evidence" value="ECO:0000250"/>
    <property type="project" value="UniProtKB"/>
</dbReference>
<dbReference type="GO" id="GO:0048471">
    <property type="term" value="C:perinuclear region of cytoplasm"/>
    <property type="evidence" value="ECO:0007669"/>
    <property type="project" value="UniProtKB-SubCell"/>
</dbReference>
<dbReference type="GO" id="GO:0051301">
    <property type="term" value="P:cell division"/>
    <property type="evidence" value="ECO:0007669"/>
    <property type="project" value="UniProtKB-KW"/>
</dbReference>
<dbReference type="GO" id="GO:0051642">
    <property type="term" value="P:centrosome localization"/>
    <property type="evidence" value="ECO:0007669"/>
    <property type="project" value="EnsemblMetazoa"/>
</dbReference>
<dbReference type="GO" id="GO:0046843">
    <property type="term" value="P:dorsal appendage formation"/>
    <property type="evidence" value="ECO:0007669"/>
    <property type="project" value="EnsemblMetazoa"/>
</dbReference>
<dbReference type="GO" id="GO:0030317">
    <property type="term" value="P:flagellated sperm motility"/>
    <property type="evidence" value="ECO:0000250"/>
    <property type="project" value="UniProtKB"/>
</dbReference>
<dbReference type="GO" id="GO:0051321">
    <property type="term" value="P:meiotic cell cycle"/>
    <property type="evidence" value="ECO:0007669"/>
    <property type="project" value="UniProtKB-KW"/>
</dbReference>
<dbReference type="GO" id="GO:0051663">
    <property type="term" value="P:oocyte nucleus localization involved in oocyte dorsal/ventral axis specification"/>
    <property type="evidence" value="ECO:0007669"/>
    <property type="project" value="EnsemblMetazoa"/>
</dbReference>
<dbReference type="GO" id="GO:0060814">
    <property type="term" value="P:posterior mRNA localization involved in anterior/posterior axis specification"/>
    <property type="evidence" value="ECO:0007669"/>
    <property type="project" value="EnsemblMetazoa"/>
</dbReference>
<dbReference type="GO" id="GO:0080154">
    <property type="term" value="P:regulation of fertilization"/>
    <property type="evidence" value="ECO:0000250"/>
    <property type="project" value="UniProtKB"/>
</dbReference>
<dbReference type="GO" id="GO:0007346">
    <property type="term" value="P:regulation of mitotic cell cycle"/>
    <property type="evidence" value="ECO:0000250"/>
    <property type="project" value="UniProtKB"/>
</dbReference>
<dbReference type="GO" id="GO:0160240">
    <property type="term" value="P:RNA polymerase II transcription initiation surveillance"/>
    <property type="evidence" value="ECO:0007669"/>
    <property type="project" value="EnsemblMetazoa"/>
</dbReference>
<dbReference type="GO" id="GO:0034472">
    <property type="term" value="P:snRNA 3'-end processing"/>
    <property type="evidence" value="ECO:0007669"/>
    <property type="project" value="EnsemblMetazoa"/>
</dbReference>
<dbReference type="GO" id="GO:0007283">
    <property type="term" value="P:spermatogenesis"/>
    <property type="evidence" value="ECO:0007669"/>
    <property type="project" value="UniProtKB-KW"/>
</dbReference>
<dbReference type="InterPro" id="IPR019355">
    <property type="entry name" value="Cell_cycle_regulator_Mat89Bb"/>
</dbReference>
<dbReference type="PANTHER" id="PTHR12955:SF1">
    <property type="entry name" value="INTEGRATOR COMPLEX SUBUNIT 13"/>
    <property type="match status" value="1"/>
</dbReference>
<dbReference type="PANTHER" id="PTHR12955">
    <property type="entry name" value="SARCOMA ANTIGEN NY-SAR-95-RELATED"/>
    <property type="match status" value="1"/>
</dbReference>
<dbReference type="Pfam" id="PF10221">
    <property type="entry name" value="Mat89Bb"/>
    <property type="match status" value="1"/>
</dbReference>
<gene>
    <name type="primary">asun</name>
    <name type="synonym">Mat89Bb</name>
    <name type="ORF">GE24382</name>
</gene>
<keyword id="KW-0131">Cell cycle</keyword>
<keyword id="KW-0132">Cell division</keyword>
<keyword id="KW-0175">Coiled coil</keyword>
<keyword id="KW-0963">Cytoplasm</keyword>
<keyword id="KW-0217">Developmental protein</keyword>
<keyword id="KW-0221">Differentiation</keyword>
<keyword id="KW-0469">Meiosis</keyword>
<keyword id="KW-0498">Mitosis</keyword>
<keyword id="KW-0539">Nucleus</keyword>
<keyword id="KW-0597">Phosphoprotein</keyword>
<keyword id="KW-0744">Spermatogenesis</keyword>
<reference evidence="5" key="1">
    <citation type="journal article" date="2007" name="Nature">
        <title>Evolution of genes and genomes on the Drosophila phylogeny.</title>
        <authorList>
            <consortium name="Drosophila 12 genomes consortium"/>
        </authorList>
    </citation>
    <scope>NUCLEOTIDE SEQUENCE [LARGE SCALE GENOMIC DNA]</scope>
    <source>
        <strain evidence="5">Tai18E2 / Tucson 14021-0261.01</strain>
    </source>
</reference>